<comment type="function">
    <text evidence="1">K(+)/H(+) antiporter that extrudes potassium in exchange for external protons and maintains the internal concentration of potassium under toxic levels.</text>
</comment>
<comment type="catalytic activity">
    <reaction evidence="1">
        <text>K(+)(in) + H(+)(out) = K(+)(out) + H(+)(in)</text>
        <dbReference type="Rhea" id="RHEA:29467"/>
        <dbReference type="ChEBI" id="CHEBI:15378"/>
        <dbReference type="ChEBI" id="CHEBI:29103"/>
    </reaction>
    <physiologicalReaction direction="left-to-right" evidence="1">
        <dbReference type="Rhea" id="RHEA:29468"/>
    </physiologicalReaction>
</comment>
<comment type="subcellular location">
    <subcellularLocation>
        <location evidence="1">Cell inner membrane</location>
        <topology evidence="1">Multi-pass membrane protein</topology>
    </subcellularLocation>
</comment>
<comment type="similarity">
    <text evidence="1">Belongs to the monovalent cation:proton antiporter 1 (CPA1) transporter (TC 2.A.36) family. NhaP2 subfamily.</text>
</comment>
<feature type="chain" id="PRO_1000064674" description="K(+)/H(+) antiporter NhaP2">
    <location>
        <begin position="1"/>
        <end position="574"/>
    </location>
</feature>
<feature type="transmembrane region" description="Helical" evidence="1">
    <location>
        <begin position="6"/>
        <end position="26"/>
    </location>
</feature>
<feature type="transmembrane region" description="Helical" evidence="1">
    <location>
        <begin position="30"/>
        <end position="50"/>
    </location>
</feature>
<feature type="transmembrane region" description="Helical" evidence="1">
    <location>
        <begin position="58"/>
        <end position="78"/>
    </location>
</feature>
<feature type="transmembrane region" description="Helical" evidence="1">
    <location>
        <begin position="87"/>
        <end position="107"/>
    </location>
</feature>
<feature type="transmembrane region" description="Helical" evidence="1">
    <location>
        <begin position="109"/>
        <end position="129"/>
    </location>
</feature>
<feature type="transmembrane region" description="Helical" evidence="1">
    <location>
        <begin position="173"/>
        <end position="193"/>
    </location>
</feature>
<feature type="transmembrane region" description="Helical" evidence="1">
    <location>
        <begin position="196"/>
        <end position="216"/>
    </location>
</feature>
<feature type="transmembrane region" description="Helical" evidence="1">
    <location>
        <begin position="219"/>
        <end position="239"/>
    </location>
</feature>
<feature type="transmembrane region" description="Helical" evidence="1">
    <location>
        <begin position="242"/>
        <end position="262"/>
    </location>
</feature>
<feature type="transmembrane region" description="Helical" evidence="1">
    <location>
        <begin position="271"/>
        <end position="291"/>
    </location>
</feature>
<feature type="transmembrane region" description="Helical" evidence="1">
    <location>
        <begin position="299"/>
        <end position="319"/>
    </location>
</feature>
<feature type="transmembrane region" description="Helical" evidence="1">
    <location>
        <begin position="335"/>
        <end position="355"/>
    </location>
</feature>
<feature type="transmembrane region" description="Helical" evidence="1">
    <location>
        <begin position="359"/>
        <end position="379"/>
    </location>
</feature>
<feature type="domain" description="RCK C-terminal" evidence="1">
    <location>
        <begin position="405"/>
        <end position="486"/>
    </location>
</feature>
<protein>
    <recommendedName>
        <fullName evidence="1">K(+)/H(+) antiporter NhaP2</fullName>
    </recommendedName>
    <alternativeName>
        <fullName evidence="1">Potassium/proton antiporter NhaP2</fullName>
    </alternativeName>
</protein>
<sequence>MDADSINSFFLIGALLAAVSVLLSPMSSRLGIPILLIFLAVGILAGEDGLGGIQFDDYSTAYLVSNLALAIILLDGGMRTRVASFRVALWPALSLATFGVAITTSITGLMAAWLFDLHWLQGLLVGAIVGSTDAAAVFSLLKGRSLNERVGATLEIESGSNDPMAVFLTVTLIAILANVDTELSVSFMLVSFIKQFGLGICLGLGGGWLLWKLVNLSKLAEGLYSILVLSGGLIIYAVSNKLGGSGILSIYLVGLFLGNKPTRGRHSILNVLDGMTWVSQIGMFLVLGLLLTPSDLFDILLPGFALAFGMILFARPLAVWLSLLPFKSFSSRDRWFISWVGLRGAVPIILAVFPMMAGLPGAQLYFNLAFFVVLVSLLIQGASLTTAARLAKVELPPKPLPISRSGVEIYPSSEWEVFVYCLSENKWCVGEPLKRLSMPDGTRIAAVFRGDKLLHPSGSTCLEAGDILCVLGQERSLDALSHLFSQAPETKEVPRFFGDFFIETDVKLADLAPIYGLDLDEEASEMTVADLVASELGAHPVIGDHFQWQSLHWVVAGLHEGKVTNIGIRLPPET</sequence>
<keyword id="KW-0050">Antiport</keyword>
<keyword id="KW-0997">Cell inner membrane</keyword>
<keyword id="KW-1003">Cell membrane</keyword>
<keyword id="KW-0406">Ion transport</keyword>
<keyword id="KW-0472">Membrane</keyword>
<keyword id="KW-0630">Potassium</keyword>
<keyword id="KW-0633">Potassium transport</keyword>
<keyword id="KW-0812">Transmembrane</keyword>
<keyword id="KW-1133">Transmembrane helix</keyword>
<keyword id="KW-0813">Transport</keyword>
<proteinExistence type="inferred from homology"/>
<reference key="1">
    <citation type="submission" date="2007-04" db="EMBL/GenBank/DDBJ databases">
        <title>Complete sequence of Shewanella putrefaciens CN-32.</title>
        <authorList>
            <consortium name="US DOE Joint Genome Institute"/>
            <person name="Copeland A."/>
            <person name="Lucas S."/>
            <person name="Lapidus A."/>
            <person name="Barry K."/>
            <person name="Detter J.C."/>
            <person name="Glavina del Rio T."/>
            <person name="Hammon N."/>
            <person name="Israni S."/>
            <person name="Dalin E."/>
            <person name="Tice H."/>
            <person name="Pitluck S."/>
            <person name="Chain P."/>
            <person name="Malfatti S."/>
            <person name="Shin M."/>
            <person name="Vergez L."/>
            <person name="Schmutz J."/>
            <person name="Larimer F."/>
            <person name="Land M."/>
            <person name="Hauser L."/>
            <person name="Kyrpides N."/>
            <person name="Mikhailova N."/>
            <person name="Romine M.F."/>
            <person name="Fredrickson J."/>
            <person name="Tiedje J."/>
            <person name="Richardson P."/>
        </authorList>
    </citation>
    <scope>NUCLEOTIDE SEQUENCE [LARGE SCALE GENOMIC DNA]</scope>
    <source>
        <strain>CN-32 / ATCC BAA-453</strain>
    </source>
</reference>
<name>NHAP2_SHEPC</name>
<dbReference type="EMBL" id="CP000681">
    <property type="protein sequence ID" value="ABP76784.1"/>
    <property type="molecule type" value="Genomic_DNA"/>
</dbReference>
<dbReference type="SMR" id="A4YA01"/>
<dbReference type="KEGG" id="spc:Sputcn32_3071"/>
<dbReference type="eggNOG" id="COG3263">
    <property type="taxonomic scope" value="Bacteria"/>
</dbReference>
<dbReference type="HOGENOM" id="CLU_005912_9_2_6"/>
<dbReference type="GO" id="GO:0005886">
    <property type="term" value="C:plasma membrane"/>
    <property type="evidence" value="ECO:0007669"/>
    <property type="project" value="UniProtKB-SubCell"/>
</dbReference>
<dbReference type="GO" id="GO:0050660">
    <property type="term" value="F:flavin adenine dinucleotide binding"/>
    <property type="evidence" value="ECO:0007669"/>
    <property type="project" value="InterPro"/>
</dbReference>
<dbReference type="GO" id="GO:0015386">
    <property type="term" value="F:potassium:proton antiporter activity"/>
    <property type="evidence" value="ECO:0007669"/>
    <property type="project" value="UniProtKB-UniRule"/>
</dbReference>
<dbReference type="GO" id="GO:0006884">
    <property type="term" value="P:cell volume homeostasis"/>
    <property type="evidence" value="ECO:0007669"/>
    <property type="project" value="InterPro"/>
</dbReference>
<dbReference type="Gene3D" id="1.20.1530.20">
    <property type="match status" value="1"/>
</dbReference>
<dbReference type="Gene3D" id="3.30.465.10">
    <property type="match status" value="1"/>
</dbReference>
<dbReference type="Gene3D" id="3.30.70.1450">
    <property type="entry name" value="Regulator of K+ conductance, C-terminal domain"/>
    <property type="match status" value="1"/>
</dbReference>
<dbReference type="HAMAP" id="MF_01075">
    <property type="entry name" value="NhaP2"/>
    <property type="match status" value="1"/>
</dbReference>
<dbReference type="InterPro" id="IPR006153">
    <property type="entry name" value="Cation/H_exchanger_TM"/>
</dbReference>
<dbReference type="InterPro" id="IPR036318">
    <property type="entry name" value="FAD-bd_PCMH-like_sf"/>
</dbReference>
<dbReference type="InterPro" id="IPR016169">
    <property type="entry name" value="FAD-bd_PCMH_sub2"/>
</dbReference>
<dbReference type="InterPro" id="IPR038770">
    <property type="entry name" value="Na+/solute_symporter_sf"/>
</dbReference>
<dbReference type="InterPro" id="IPR023729">
    <property type="entry name" value="NhaP2"/>
</dbReference>
<dbReference type="InterPro" id="IPR006037">
    <property type="entry name" value="RCK_C"/>
</dbReference>
<dbReference type="InterPro" id="IPR036721">
    <property type="entry name" value="RCK_C_sf"/>
</dbReference>
<dbReference type="InterPro" id="IPR005170">
    <property type="entry name" value="Transptr-assoc_dom"/>
</dbReference>
<dbReference type="NCBIfam" id="NF003714">
    <property type="entry name" value="PRK05326.1-1"/>
    <property type="match status" value="1"/>
</dbReference>
<dbReference type="NCBIfam" id="NF003715">
    <property type="entry name" value="PRK05326.1-2"/>
    <property type="match status" value="1"/>
</dbReference>
<dbReference type="NCBIfam" id="NF003716">
    <property type="entry name" value="PRK05326.1-3"/>
    <property type="match status" value="1"/>
</dbReference>
<dbReference type="PANTHER" id="PTHR32507:SF7">
    <property type="entry name" value="K(+)_H(+) ANTIPORTER NHAP2"/>
    <property type="match status" value="1"/>
</dbReference>
<dbReference type="PANTHER" id="PTHR32507">
    <property type="entry name" value="NA(+)/H(+) ANTIPORTER 1"/>
    <property type="match status" value="1"/>
</dbReference>
<dbReference type="Pfam" id="PF03471">
    <property type="entry name" value="CorC_HlyC"/>
    <property type="match status" value="1"/>
</dbReference>
<dbReference type="Pfam" id="PF00999">
    <property type="entry name" value="Na_H_Exchanger"/>
    <property type="match status" value="1"/>
</dbReference>
<dbReference type="Pfam" id="PF02080">
    <property type="entry name" value="TrkA_C"/>
    <property type="match status" value="1"/>
</dbReference>
<dbReference type="SMART" id="SM01091">
    <property type="entry name" value="CorC_HlyC"/>
    <property type="match status" value="1"/>
</dbReference>
<dbReference type="SUPFAM" id="SSF56176">
    <property type="entry name" value="FAD-binding/transporter-associated domain-like"/>
    <property type="match status" value="1"/>
</dbReference>
<dbReference type="SUPFAM" id="SSF116726">
    <property type="entry name" value="TrkA C-terminal domain-like"/>
    <property type="match status" value="1"/>
</dbReference>
<dbReference type="PROSITE" id="PS51202">
    <property type="entry name" value="RCK_C"/>
    <property type="match status" value="1"/>
</dbReference>
<gene>
    <name evidence="1" type="primary">nhaP2</name>
    <name type="synonym">cvrA</name>
    <name type="ordered locus">Sputcn32_3071</name>
</gene>
<organism>
    <name type="scientific">Shewanella putrefaciens (strain CN-32 / ATCC BAA-453)</name>
    <dbReference type="NCBI Taxonomy" id="319224"/>
    <lineage>
        <taxon>Bacteria</taxon>
        <taxon>Pseudomonadati</taxon>
        <taxon>Pseudomonadota</taxon>
        <taxon>Gammaproteobacteria</taxon>
        <taxon>Alteromonadales</taxon>
        <taxon>Shewanellaceae</taxon>
        <taxon>Shewanella</taxon>
    </lineage>
</organism>
<evidence type="ECO:0000255" key="1">
    <source>
        <dbReference type="HAMAP-Rule" id="MF_01075"/>
    </source>
</evidence>
<accession>A4YA01</accession>